<evidence type="ECO:0000256" key="1">
    <source>
        <dbReference type="SAM" id="MobiDB-lite"/>
    </source>
</evidence>
<evidence type="ECO:0000312" key="2">
    <source>
        <dbReference type="WormBase" id="C06E1.11"/>
    </source>
</evidence>
<gene>
    <name evidence="2" type="ORF">C06E1.11</name>
</gene>
<reference key="1">
    <citation type="journal article" date="1994" name="Nature">
        <title>2.2 Mb of contiguous nucleotide sequence from chromosome III of C. elegans.</title>
        <authorList>
            <person name="Wilson R."/>
            <person name="Ainscough R."/>
            <person name="Anderson K."/>
            <person name="Baynes C."/>
            <person name="Berks M."/>
            <person name="Bonfield J."/>
            <person name="Burton J."/>
            <person name="Connell M."/>
            <person name="Copsey T."/>
            <person name="Cooper J."/>
            <person name="Coulson A."/>
            <person name="Craxton M."/>
            <person name="Dear S."/>
            <person name="Du Z."/>
            <person name="Durbin R."/>
            <person name="Favello A."/>
            <person name="Fraser A."/>
            <person name="Fulton L."/>
            <person name="Gardner A."/>
            <person name="Green P."/>
            <person name="Hawkins T."/>
            <person name="Hillier L."/>
            <person name="Jier M."/>
            <person name="Johnston L."/>
            <person name="Jones M."/>
            <person name="Kershaw J."/>
            <person name="Kirsten J."/>
            <person name="Laisster N."/>
            <person name="Latreille P."/>
            <person name="Lightning J."/>
            <person name="Lloyd C."/>
            <person name="Mortimore B."/>
            <person name="O'Callaghan M."/>
            <person name="Parsons J."/>
            <person name="Percy C."/>
            <person name="Rifken L."/>
            <person name="Roopra A."/>
            <person name="Saunders D."/>
            <person name="Shownkeen R."/>
            <person name="Sims M."/>
            <person name="Smaldon N."/>
            <person name="Smith A."/>
            <person name="Smith M."/>
            <person name="Sonnhammer E."/>
            <person name="Staden R."/>
            <person name="Sulston J."/>
            <person name="Thierry-Mieg J."/>
            <person name="Thomas K."/>
            <person name="Vaudin M."/>
            <person name="Vaughan K."/>
            <person name="Waterston R."/>
            <person name="Watson A."/>
            <person name="Weinstock L."/>
            <person name="Wilkinson-Sproat J."/>
            <person name="Wohldman P."/>
        </authorList>
    </citation>
    <scope>NUCLEOTIDE SEQUENCE [LARGE SCALE GENOMIC DNA]</scope>
    <source>
        <strain>Bristol N2</strain>
    </source>
</reference>
<reference key="2">
    <citation type="journal article" date="1998" name="Science">
        <title>Genome sequence of the nematode C. elegans: a platform for investigating biology.</title>
        <authorList>
            <consortium name="The C. elegans sequencing consortium"/>
        </authorList>
    </citation>
    <scope>NUCLEOTIDE SEQUENCE [LARGE SCALE GENOMIC DNA]</scope>
    <source>
        <strain>Bristol N2</strain>
    </source>
</reference>
<feature type="chain" id="PRO_0000065160" description="Uncharacterized protein C06E1.11">
    <location>
        <begin position="1"/>
        <end position="234"/>
    </location>
</feature>
<feature type="region of interest" description="Disordered" evidence="1">
    <location>
        <begin position="1"/>
        <end position="23"/>
    </location>
</feature>
<name>YKQA_CAEEL</name>
<accession>P34306</accession>
<dbReference type="EMBL" id="BX284603">
    <property type="protein sequence ID" value="CCD62571.2"/>
    <property type="molecule type" value="Genomic_DNA"/>
</dbReference>
<dbReference type="PIR" id="A88534">
    <property type="entry name" value="A88534"/>
</dbReference>
<dbReference type="RefSeq" id="NP_001379602.1">
    <property type="nucleotide sequence ID" value="NM_001392157.1"/>
</dbReference>
<dbReference type="RefSeq" id="NP_498896.1">
    <property type="nucleotide sequence ID" value="NM_066495.1"/>
</dbReference>
<dbReference type="FunCoup" id="P34306">
    <property type="interactions" value="226"/>
</dbReference>
<dbReference type="STRING" id="6239.C06E1.11.1"/>
<dbReference type="PaxDb" id="6239-C06E1.11"/>
<dbReference type="EnsemblMetazoa" id="C06E1.11.1">
    <property type="protein sequence ID" value="C06E1.11.1"/>
    <property type="gene ID" value="WBGene00015526"/>
</dbReference>
<dbReference type="EnsemblMetazoa" id="C06E1.11.2">
    <property type="protein sequence ID" value="C06E1.11.2"/>
    <property type="gene ID" value="WBGene00015526"/>
</dbReference>
<dbReference type="GeneID" id="182318"/>
<dbReference type="UCSC" id="C06E1.11">
    <property type="organism name" value="c. elegans"/>
</dbReference>
<dbReference type="AGR" id="WB:WBGene00015526"/>
<dbReference type="WormBase" id="C06E1.11">
    <property type="protein sequence ID" value="CE54089"/>
    <property type="gene ID" value="WBGene00015526"/>
</dbReference>
<dbReference type="eggNOG" id="ENOG502TFKE">
    <property type="taxonomic scope" value="Eukaryota"/>
</dbReference>
<dbReference type="GeneTree" id="ENSGT00970000196419"/>
<dbReference type="HOGENOM" id="CLU_746464_0_0_1"/>
<dbReference type="InParanoid" id="P34306"/>
<dbReference type="OrthoDB" id="5870415at2759"/>
<dbReference type="PRO" id="PR:P34306"/>
<dbReference type="Proteomes" id="UP000001940">
    <property type="component" value="Chromosome III"/>
</dbReference>
<dbReference type="Bgee" id="WBGene00015526">
    <property type="expression patterns" value="Expressed in adult organism and 2 other cell types or tissues"/>
</dbReference>
<dbReference type="PANTHER" id="PTHR21525:SF9">
    <property type="entry name" value="CHANNEL_COLICIN DOMAIN-CONTAINING PROTEIN"/>
    <property type="match status" value="1"/>
</dbReference>
<dbReference type="PANTHER" id="PTHR21525">
    <property type="entry name" value="MOTILE SPERM PROTEIN"/>
    <property type="match status" value="1"/>
</dbReference>
<organism>
    <name type="scientific">Caenorhabditis elegans</name>
    <dbReference type="NCBI Taxonomy" id="6239"/>
    <lineage>
        <taxon>Eukaryota</taxon>
        <taxon>Metazoa</taxon>
        <taxon>Ecdysozoa</taxon>
        <taxon>Nematoda</taxon>
        <taxon>Chromadorea</taxon>
        <taxon>Rhabditida</taxon>
        <taxon>Rhabditina</taxon>
        <taxon>Rhabditomorpha</taxon>
        <taxon>Rhabditoidea</taxon>
        <taxon>Rhabditidae</taxon>
        <taxon>Peloderinae</taxon>
        <taxon>Caenorhabditis</taxon>
    </lineage>
</organism>
<keyword id="KW-1185">Reference proteome</keyword>
<proteinExistence type="predicted"/>
<protein>
    <recommendedName>
        <fullName>Uncharacterized protein C06E1.11</fullName>
    </recommendedName>
</protein>
<sequence length="234" mass="25129">MVDQIRSPSWKSGFPSHQHQQGSYWTQGSTSSYLSTAKTAGVLGDVAEKANKIAPILTTAAVIYEMYQVGKEVKKDYHHGTTRNTIKTVATTATTYASASAAALAGSSIGSAIFPGIGTIFGGIIGGIAGGLFGGHVAETASEQILTHVKYDVTTLTCKECGKDYDWKKYEEAQGVCSCQLQIVLSNDAATKLCAILAEKIQSPSQTSNYAFNSYLCYYYLHIFACLNKILNHK</sequence>